<name>PDE1_CAEEL</name>
<comment type="function">
    <text evidence="5">Redundantly with pde-5, plays a role in the AFD thermosensory neurons to regulate microvilli receptive ending morphology, possibly by regulating cGMP levels.</text>
</comment>
<comment type="catalytic activity">
    <reaction>
        <text>a nucleoside 3',5'-cyclic phosphate + H2O = a nucleoside 5'-phosphate + H(+)</text>
        <dbReference type="Rhea" id="RHEA:14653"/>
        <dbReference type="ChEBI" id="CHEBI:15377"/>
        <dbReference type="ChEBI" id="CHEBI:15378"/>
        <dbReference type="ChEBI" id="CHEBI:57867"/>
        <dbReference type="ChEBI" id="CHEBI:58464"/>
        <dbReference type="EC" id="3.1.4.17"/>
    </reaction>
</comment>
<comment type="cofactor">
    <cofactor evidence="1">
        <name>a divalent metal cation</name>
        <dbReference type="ChEBI" id="CHEBI:60240"/>
    </cofactor>
    <text evidence="1">Binds 2 divalent metal cations per subunit. Site 1 may preferentially bind zinc ions, while site 2 has a preference for magnesium and/or manganese ions.</text>
</comment>
<comment type="subunit">
    <text evidence="4">Interacts with cmd-1 in the presence of Ca(2+).</text>
</comment>
<comment type="tissue specificity">
    <text evidence="5">Expressed in AFD thermosensory neurons.</text>
</comment>
<comment type="similarity">
    <text evidence="6">Belongs to the cyclic nucleotide phosphodiesterase family.</text>
</comment>
<proteinExistence type="evidence at protein level"/>
<feature type="chain" id="PRO_0000198844" description="Probable 3',5'-cyclic phosphodiesterase pde-1">
    <location>
        <begin position="1"/>
        <end position="664"/>
    </location>
</feature>
<feature type="domain" description="PDEase" evidence="2">
    <location>
        <begin position="256"/>
        <end position="634"/>
    </location>
</feature>
<feature type="region of interest" description="Disordered" evidence="3">
    <location>
        <begin position="24"/>
        <end position="60"/>
    </location>
</feature>
<feature type="region of interest" description="Disordered" evidence="3">
    <location>
        <begin position="113"/>
        <end position="142"/>
    </location>
</feature>
<feature type="region of interest" description="Disordered" evidence="3">
    <location>
        <begin position="564"/>
        <end position="597"/>
    </location>
</feature>
<feature type="region of interest" description="Disordered" evidence="3">
    <location>
        <begin position="630"/>
        <end position="664"/>
    </location>
</feature>
<feature type="compositionally biased region" description="Basic and acidic residues" evidence="3">
    <location>
        <begin position="28"/>
        <end position="38"/>
    </location>
</feature>
<feature type="compositionally biased region" description="Basic and acidic residues" evidence="3">
    <location>
        <begin position="114"/>
        <end position="130"/>
    </location>
</feature>
<feature type="compositionally biased region" description="Basic and acidic residues" evidence="3">
    <location>
        <begin position="630"/>
        <end position="644"/>
    </location>
</feature>
<feature type="active site" description="Proton donor" evidence="1">
    <location>
        <position position="333"/>
    </location>
</feature>
<feature type="binding site" evidence="1">
    <location>
        <position position="337"/>
    </location>
    <ligand>
        <name>a divalent metal cation</name>
        <dbReference type="ChEBI" id="CHEBI:60240"/>
        <label>1</label>
    </ligand>
</feature>
<feature type="binding site" evidence="1">
    <location>
        <position position="373"/>
    </location>
    <ligand>
        <name>a divalent metal cation</name>
        <dbReference type="ChEBI" id="CHEBI:60240"/>
        <label>1</label>
    </ligand>
</feature>
<feature type="binding site" evidence="1">
    <location>
        <position position="374"/>
    </location>
    <ligand>
        <name>a divalent metal cation</name>
        <dbReference type="ChEBI" id="CHEBI:60240"/>
        <label>1</label>
    </ligand>
</feature>
<feature type="binding site" evidence="1">
    <location>
        <position position="374"/>
    </location>
    <ligand>
        <name>a divalent metal cation</name>
        <dbReference type="ChEBI" id="CHEBI:60240"/>
        <label>2</label>
    </ligand>
</feature>
<feature type="binding site" evidence="1">
    <location>
        <position position="480"/>
    </location>
    <ligand>
        <name>a divalent metal cation</name>
        <dbReference type="ChEBI" id="CHEBI:60240"/>
        <label>1</label>
    </ligand>
</feature>
<sequence length="664" mass="74855">MNRARKTSSCGCFRSAFCLLKPSTSSASEEHGDSDKKLLSVQLITPRDEEEQTSSRSIKIPPLDLNGLDCKKNAVAARRAGRRRTSEGGGVRGKGHFAEVVLDGLQRPVSLLRNQKEKSNSDDNCQEKEPTSPSSSRKKSYDNAPALESLEKLRYILHQLNSGQLPLEDLKRNIEYAALVLETAYMDETRRICDEDDDLAEVTPETVPDEVREWLAATFTRQNAGKKRDKPKFKSVANAIRTGIFFEKLFRKQQVVQCPIPPEIAELMKEVCTWSFSPFQLNEVSEGHALKYVGFELFNRYGFMDRFKVPLTALENYLSALEVGYSKHNNPYHNVVHAADVTQSSHFMLSQTGLANSLGDLELLAVLFGALIHDYEHTGHTNNFHIQSQSQFAMLYNDRSVLENHHVSSCFRLMKEDDKNILTHLTRDEYKELRNMVIEIVLATDMSTHFMQIKTMKSMLSLPEGIDKNKALCLIVHACDISHPAKPWNLHERWTEGVLEEFFRQGDLEASMGLPYSPLCDRHTVHVADSQIGFIDFIVEPTMVVCGELLVKMVEPLVSLPPTDSLFPPSVDGGDDKSPSNALSPLPDLRNSSTSPSSIRRIPLNYAGKLDIPTPWMKFLHENKAHWKERAAKEEEERKIKEAAEAEAAAKQVEENKENGVTTN</sequence>
<dbReference type="EC" id="3.1.4.17"/>
<dbReference type="EMBL" id="Z81114">
    <property type="protein sequence ID" value="CAB03289.1"/>
    <property type="molecule type" value="Genomic_DNA"/>
</dbReference>
<dbReference type="PIR" id="T24459">
    <property type="entry name" value="T24459"/>
</dbReference>
<dbReference type="RefSeq" id="NP_493343.1">
    <property type="nucleotide sequence ID" value="NM_060942.5"/>
</dbReference>
<dbReference type="SMR" id="O18696"/>
<dbReference type="BioGRID" id="38595">
    <property type="interactions" value="1"/>
</dbReference>
<dbReference type="FunCoup" id="O18696">
    <property type="interactions" value="744"/>
</dbReference>
<dbReference type="STRING" id="6239.T04D3.3a.1"/>
<dbReference type="PaxDb" id="6239-T04D3.3a"/>
<dbReference type="EnsemblMetazoa" id="T04D3.3a.1">
    <property type="protein sequence ID" value="T04D3.3a.1"/>
    <property type="gene ID" value="WBGene00011433"/>
</dbReference>
<dbReference type="GeneID" id="173200"/>
<dbReference type="KEGG" id="cel:CELE_T04D3.3"/>
<dbReference type="UCSC" id="T04D3.3">
    <property type="organism name" value="c. elegans"/>
</dbReference>
<dbReference type="AGR" id="WB:WBGene00011433"/>
<dbReference type="CTD" id="173200"/>
<dbReference type="WormBase" id="T04D3.3a">
    <property type="protein sequence ID" value="CE16340"/>
    <property type="gene ID" value="WBGene00011433"/>
    <property type="gene designation" value="pde-1"/>
</dbReference>
<dbReference type="eggNOG" id="KOG3688">
    <property type="taxonomic scope" value="Eukaryota"/>
</dbReference>
<dbReference type="GeneTree" id="ENSGT00940000157043"/>
<dbReference type="InParanoid" id="O18696"/>
<dbReference type="OMA" id="KIQWKDS"/>
<dbReference type="OrthoDB" id="189220at2759"/>
<dbReference type="PhylomeDB" id="O18696"/>
<dbReference type="Reactome" id="R-CEL-111957">
    <property type="pathway name" value="Cam-PDE 1 activation"/>
</dbReference>
<dbReference type="Reactome" id="R-CEL-418457">
    <property type="pathway name" value="cGMP effects"/>
</dbReference>
<dbReference type="Reactome" id="R-CEL-418555">
    <property type="pathway name" value="G alpha (s) signalling events"/>
</dbReference>
<dbReference type="PRO" id="PR:O18696"/>
<dbReference type="Proteomes" id="UP000001940">
    <property type="component" value="Chromosome I"/>
</dbReference>
<dbReference type="Bgee" id="WBGene00011433">
    <property type="expression patterns" value="Expressed in larva and 3 other cell types or tissues"/>
</dbReference>
<dbReference type="ExpressionAtlas" id="O18696">
    <property type="expression patterns" value="baseline and differential"/>
</dbReference>
<dbReference type="GO" id="GO:0004115">
    <property type="term" value="F:3',5'-cyclic-AMP phosphodiesterase activity"/>
    <property type="evidence" value="ECO:0000314"/>
    <property type="project" value="WormBase"/>
</dbReference>
<dbReference type="GO" id="GO:0047555">
    <property type="term" value="F:3',5'-cyclic-GMP phosphodiesterase activity"/>
    <property type="evidence" value="ECO:0000314"/>
    <property type="project" value="WormBase"/>
</dbReference>
<dbReference type="GO" id="GO:0005516">
    <property type="term" value="F:calmodulin binding"/>
    <property type="evidence" value="ECO:0000353"/>
    <property type="project" value="WormBase"/>
</dbReference>
<dbReference type="GO" id="GO:0048101">
    <property type="term" value="F:calmodulin-activated 3',5'-cyclic-GMP phosphodiesterase activity"/>
    <property type="evidence" value="ECO:0000318"/>
    <property type="project" value="GO_Central"/>
</dbReference>
<dbReference type="GO" id="GO:0004117">
    <property type="term" value="F:calmodulin-activated dual specificity 3',5'-cyclic-GMP, 3',5'-cyclic-AMP phosphodiesterase activity"/>
    <property type="evidence" value="ECO:0000318"/>
    <property type="project" value="GO_Central"/>
</dbReference>
<dbReference type="GO" id="GO:0046872">
    <property type="term" value="F:metal ion binding"/>
    <property type="evidence" value="ECO:0007669"/>
    <property type="project" value="UniProtKB-KW"/>
</dbReference>
<dbReference type="GO" id="GO:0019933">
    <property type="term" value="P:cAMP-mediated signaling"/>
    <property type="evidence" value="ECO:0000318"/>
    <property type="project" value="GO_Central"/>
</dbReference>
<dbReference type="GO" id="GO:0007635">
    <property type="term" value="P:chemosensory behavior"/>
    <property type="evidence" value="ECO:0000316"/>
    <property type="project" value="UniProtKB"/>
</dbReference>
<dbReference type="GO" id="GO:0006935">
    <property type="term" value="P:chemotaxis"/>
    <property type="evidence" value="ECO:0000316"/>
    <property type="project" value="UniProtKB"/>
</dbReference>
<dbReference type="GO" id="GO:0008340">
    <property type="term" value="P:determination of adult lifespan"/>
    <property type="evidence" value="ECO:0000316"/>
    <property type="project" value="UniProtKB"/>
</dbReference>
<dbReference type="GO" id="GO:0032528">
    <property type="term" value="P:microvillus organization"/>
    <property type="evidence" value="ECO:0000316"/>
    <property type="project" value="WormBase"/>
</dbReference>
<dbReference type="GO" id="GO:0010754">
    <property type="term" value="P:negative regulation of cGMP-mediated signaling"/>
    <property type="evidence" value="ECO:0000314"/>
    <property type="project" value="WormBase"/>
</dbReference>
<dbReference type="GO" id="GO:0007602">
    <property type="term" value="P:phototransduction"/>
    <property type="evidence" value="ECO:0000316"/>
    <property type="project" value="UniProtKB"/>
</dbReference>
<dbReference type="GO" id="GO:0010628">
    <property type="term" value="P:positive regulation of gene expression"/>
    <property type="evidence" value="ECO:0000316"/>
    <property type="project" value="UniProtKB"/>
</dbReference>
<dbReference type="GO" id="GO:2000114">
    <property type="term" value="P:regulation of establishment of cell polarity"/>
    <property type="evidence" value="ECO:0000316"/>
    <property type="project" value="WormBase"/>
</dbReference>
<dbReference type="GO" id="GO:0010446">
    <property type="term" value="P:response to alkaline pH"/>
    <property type="evidence" value="ECO:0000316"/>
    <property type="project" value="UniProtKB"/>
</dbReference>
<dbReference type="GO" id="GO:0042542">
    <property type="term" value="P:response to hydrogen peroxide"/>
    <property type="evidence" value="ECO:0000316"/>
    <property type="project" value="UniProtKB"/>
</dbReference>
<dbReference type="GO" id="GO:0070482">
    <property type="term" value="P:response to oxygen levels"/>
    <property type="evidence" value="ECO:0000315"/>
    <property type="project" value="WormBase"/>
</dbReference>
<dbReference type="CDD" id="cd00077">
    <property type="entry name" value="HDc"/>
    <property type="match status" value="1"/>
</dbReference>
<dbReference type="FunFam" id="1.10.1300.10:FF:000028">
    <property type="entry name" value="Phosphodiesterase"/>
    <property type="match status" value="1"/>
</dbReference>
<dbReference type="Gene3D" id="1.10.1300.10">
    <property type="entry name" value="3'5'-cyclic nucleotide phosphodiesterase, catalytic domain"/>
    <property type="match status" value="1"/>
</dbReference>
<dbReference type="InterPro" id="IPR003607">
    <property type="entry name" value="HD/PDEase_dom"/>
</dbReference>
<dbReference type="InterPro" id="IPR023088">
    <property type="entry name" value="PDEase"/>
</dbReference>
<dbReference type="InterPro" id="IPR002073">
    <property type="entry name" value="PDEase_catalytic_dom"/>
</dbReference>
<dbReference type="InterPro" id="IPR036971">
    <property type="entry name" value="PDEase_catalytic_dom_sf"/>
</dbReference>
<dbReference type="InterPro" id="IPR023174">
    <property type="entry name" value="PDEase_CS"/>
</dbReference>
<dbReference type="InterPro" id="IPR013706">
    <property type="entry name" value="PDEase_N"/>
</dbReference>
<dbReference type="PANTHER" id="PTHR11347">
    <property type="entry name" value="CYCLIC NUCLEOTIDE PHOSPHODIESTERASE"/>
    <property type="match status" value="1"/>
</dbReference>
<dbReference type="Pfam" id="PF00233">
    <property type="entry name" value="PDEase_I"/>
    <property type="match status" value="1"/>
</dbReference>
<dbReference type="Pfam" id="PF08499">
    <property type="entry name" value="PDEase_I_N"/>
    <property type="match status" value="1"/>
</dbReference>
<dbReference type="PRINTS" id="PR00387">
    <property type="entry name" value="PDIESTERASE1"/>
</dbReference>
<dbReference type="SMART" id="SM00471">
    <property type="entry name" value="HDc"/>
    <property type="match status" value="1"/>
</dbReference>
<dbReference type="SUPFAM" id="SSF109604">
    <property type="entry name" value="HD-domain/PDEase-like"/>
    <property type="match status" value="1"/>
</dbReference>
<dbReference type="PROSITE" id="PS00126">
    <property type="entry name" value="PDEASE_I_1"/>
    <property type="match status" value="1"/>
</dbReference>
<dbReference type="PROSITE" id="PS51845">
    <property type="entry name" value="PDEASE_I_2"/>
    <property type="match status" value="1"/>
</dbReference>
<organism>
    <name type="scientific">Caenorhabditis elegans</name>
    <dbReference type="NCBI Taxonomy" id="6239"/>
    <lineage>
        <taxon>Eukaryota</taxon>
        <taxon>Metazoa</taxon>
        <taxon>Ecdysozoa</taxon>
        <taxon>Nematoda</taxon>
        <taxon>Chromadorea</taxon>
        <taxon>Rhabditida</taxon>
        <taxon>Rhabditina</taxon>
        <taxon>Rhabditomorpha</taxon>
        <taxon>Rhabditoidea</taxon>
        <taxon>Rhabditidae</taxon>
        <taxon>Peloderinae</taxon>
        <taxon>Caenorhabditis</taxon>
    </lineage>
</organism>
<protein>
    <recommendedName>
        <fullName>Probable 3',5'-cyclic phosphodiesterase pde-1</fullName>
        <ecNumber>3.1.4.17</ecNumber>
    </recommendedName>
</protein>
<gene>
    <name type="primary">pde-1</name>
    <name type="ORF">T04D3.3</name>
</gene>
<accession>O18696</accession>
<evidence type="ECO:0000250" key="1"/>
<evidence type="ECO:0000255" key="2">
    <source>
        <dbReference type="PROSITE-ProRule" id="PRU01192"/>
    </source>
</evidence>
<evidence type="ECO:0000256" key="3">
    <source>
        <dbReference type="SAM" id="MobiDB-lite"/>
    </source>
</evidence>
<evidence type="ECO:0000269" key="4">
    <source>
    </source>
</evidence>
<evidence type="ECO:0000269" key="5">
    <source>
    </source>
</evidence>
<evidence type="ECO:0000305" key="6"/>
<reference key="1">
    <citation type="journal article" date="1998" name="Science">
        <title>Genome sequence of the nematode C. elegans: a platform for investigating biology.</title>
        <authorList>
            <consortium name="The C. elegans sequencing consortium"/>
        </authorList>
    </citation>
    <scope>NUCLEOTIDE SEQUENCE [LARGE SCALE GENOMIC DNA]</scope>
    <source>
        <strain>Bristol N2</strain>
    </source>
</reference>
<reference key="2">
    <citation type="journal article" date="2008" name="Cell Calcium">
        <title>Ca(2+)/Calmodulin-binding proteins from the C. elegans proteome.</title>
        <authorList>
            <person name="Shen X."/>
            <person name="Valencia C.A."/>
            <person name="Gao W."/>
            <person name="Cotten S.W."/>
            <person name="Dong B."/>
            <person name="Huang B.C."/>
            <person name="Liu R."/>
        </authorList>
    </citation>
    <scope>INTERACTION WITH CMD-1</scope>
</reference>
<reference key="3">
    <citation type="journal article" date="2016" name="Cell">
        <title>A glial K/Cl transporter controls neuronal receptive ending shape by chloride inhibition of an rGC.</title>
        <authorList>
            <person name="Singhvi A."/>
            <person name="Liu B."/>
            <person name="Friedman C.J."/>
            <person name="Fong J."/>
            <person name="Lu Y."/>
            <person name="Huang X.Y."/>
            <person name="Shaham S."/>
        </authorList>
    </citation>
    <scope>FUNCTION</scope>
    <scope>TISSUE SPECIFICITY</scope>
</reference>
<keyword id="KW-0112">Calmodulin-binding</keyword>
<keyword id="KW-0140">cGMP</keyword>
<keyword id="KW-0378">Hydrolase</keyword>
<keyword id="KW-0479">Metal-binding</keyword>
<keyword id="KW-1185">Reference proteome</keyword>